<keyword id="KW-0067">ATP-binding</keyword>
<keyword id="KW-0315">Glutamine amidotransferase</keyword>
<keyword id="KW-0436">Ligase</keyword>
<keyword id="KW-0479">Metal-binding</keyword>
<keyword id="KW-0547">Nucleotide-binding</keyword>
<keyword id="KW-1185">Reference proteome</keyword>
<keyword id="KW-0862">Zinc</keyword>
<accession>Q4JBY3</accession>
<dbReference type="EC" id="6.3.4.20"/>
<dbReference type="EMBL" id="CP000077">
    <property type="protein sequence ID" value="AAY79696.1"/>
    <property type="molecule type" value="Genomic_DNA"/>
</dbReference>
<dbReference type="RefSeq" id="WP_011277198.1">
    <property type="nucleotide sequence ID" value="NC_007181.1"/>
</dbReference>
<dbReference type="SMR" id="Q4JBY3"/>
<dbReference type="STRING" id="330779.Saci_0280"/>
<dbReference type="GeneID" id="14550810"/>
<dbReference type="GeneID" id="78440631"/>
<dbReference type="KEGG" id="sai:Saci_0280"/>
<dbReference type="PATRIC" id="fig|330779.12.peg.277"/>
<dbReference type="eggNOG" id="arCOG00039">
    <property type="taxonomic scope" value="Archaea"/>
</dbReference>
<dbReference type="HOGENOM" id="CLU_550565_0_0_2"/>
<dbReference type="UniPathway" id="UPA00391"/>
<dbReference type="Proteomes" id="UP000001018">
    <property type="component" value="Chromosome"/>
</dbReference>
<dbReference type="GO" id="GO:0005524">
    <property type="term" value="F:ATP binding"/>
    <property type="evidence" value="ECO:0007669"/>
    <property type="project" value="UniProtKB-UniRule"/>
</dbReference>
<dbReference type="GO" id="GO:0016879">
    <property type="term" value="F:ligase activity, forming carbon-nitrogen bonds"/>
    <property type="evidence" value="ECO:0007669"/>
    <property type="project" value="UniProtKB-UniRule"/>
</dbReference>
<dbReference type="GO" id="GO:0008270">
    <property type="term" value="F:zinc ion binding"/>
    <property type="evidence" value="ECO:0007669"/>
    <property type="project" value="UniProtKB-UniRule"/>
</dbReference>
<dbReference type="CDD" id="cd00352">
    <property type="entry name" value="Gn_AT_II"/>
    <property type="match status" value="1"/>
</dbReference>
<dbReference type="CDD" id="cd01995">
    <property type="entry name" value="QueC-like"/>
    <property type="match status" value="1"/>
</dbReference>
<dbReference type="Gene3D" id="3.60.20.10">
    <property type="entry name" value="Glutamine Phosphoribosylpyrophosphate, subunit 1, domain 1"/>
    <property type="match status" value="1"/>
</dbReference>
<dbReference type="Gene3D" id="3.40.50.620">
    <property type="entry name" value="HUPs"/>
    <property type="match status" value="1"/>
</dbReference>
<dbReference type="HAMAP" id="MF_01633">
    <property type="entry name" value="QueC"/>
    <property type="match status" value="1"/>
</dbReference>
<dbReference type="InterPro" id="IPR017932">
    <property type="entry name" value="GATase_2_dom"/>
</dbReference>
<dbReference type="InterPro" id="IPR029055">
    <property type="entry name" value="Ntn_hydrolases_N"/>
</dbReference>
<dbReference type="InterPro" id="IPR018317">
    <property type="entry name" value="QueC"/>
</dbReference>
<dbReference type="InterPro" id="IPR014729">
    <property type="entry name" value="Rossmann-like_a/b/a_fold"/>
</dbReference>
<dbReference type="NCBIfam" id="TIGR00364">
    <property type="entry name" value="7-cyano-7-deazaguanine synthase QueC"/>
    <property type="match status" value="1"/>
</dbReference>
<dbReference type="PANTHER" id="PTHR42914">
    <property type="entry name" value="7-CYANO-7-DEAZAGUANINE SYNTHASE"/>
    <property type="match status" value="1"/>
</dbReference>
<dbReference type="PANTHER" id="PTHR42914:SF1">
    <property type="entry name" value="7-CYANO-7-DEAZAGUANINE SYNTHASE"/>
    <property type="match status" value="1"/>
</dbReference>
<dbReference type="Pfam" id="PF13537">
    <property type="entry name" value="GATase_7"/>
    <property type="match status" value="1"/>
</dbReference>
<dbReference type="Pfam" id="PF06508">
    <property type="entry name" value="QueC"/>
    <property type="match status" value="1"/>
</dbReference>
<dbReference type="SUPFAM" id="SSF52402">
    <property type="entry name" value="Adenine nucleotide alpha hydrolases-like"/>
    <property type="match status" value="1"/>
</dbReference>
<dbReference type="SUPFAM" id="SSF56235">
    <property type="entry name" value="N-terminal nucleophile aminohydrolases (Ntn hydrolases)"/>
    <property type="match status" value="1"/>
</dbReference>
<dbReference type="PROSITE" id="PS51278">
    <property type="entry name" value="GATASE_TYPE_2"/>
    <property type="match status" value="1"/>
</dbReference>
<evidence type="ECO:0000250" key="1"/>
<evidence type="ECO:0000305" key="2"/>
<proteinExistence type="inferred from homology"/>
<sequence length="462" mass="51977">MCSVTGVLILNPHNYKEIEKKLAKILIRAEDRGRDSFGIVVIQKDGSTKSSKHVGKPSLQEEKLYGILDENSKVVIANNRAEPTTEYVRRKTENDIQPFEGERFVVTHNGIIANDMELEKKYKVSKLSRIDSSVLPPVLDRSWNGNLDSLSEILNSIRGSFALVIGDKKNPDRIFIAQNFKPVYMMYDRDLGAVFFTSLDDYFDATELDNVTKLDPYSVVMVDDKLEIRKVPLLKEKNKKRILVVASGGLDSTVAATYLVRQGHEVTLLHFNYHHKAEEKEREAVRKISEYLNVPFVEIDTDLFKIVGHSTLIKGSSGEIVKDRKGEEGAEFAHEWVPARNLIFFSVALAMAEAYGFDAIASGINLEEAGAYPDNEMEFVRMFSRLVPYAVGPNKKVEVLMPVGNLVKHEIVKLGVQIDAPLHLTWSCYEGGNKHCGKCGPCYMRKVAFEVNGLKDPVEYEA</sequence>
<name>QUEC_SULAC</name>
<feature type="initiator methionine" description="Removed" evidence="1">
    <location>
        <position position="1"/>
    </location>
</feature>
<feature type="chain" id="PRO_0000246989" description="7-cyano-7-deazaguanine synthase">
    <location>
        <begin position="2"/>
        <end position="462"/>
    </location>
</feature>
<feature type="domain" description="Glutamine amidotransferase type-2">
    <location>
        <begin position="2"/>
        <end position="225"/>
    </location>
</feature>
<feature type="active site" description="For GATase activity" evidence="1">
    <location>
        <position position="2"/>
    </location>
</feature>
<feature type="binding site" evidence="1">
    <location>
        <begin position="246"/>
        <end position="256"/>
    </location>
    <ligand>
        <name>ATP</name>
        <dbReference type="ChEBI" id="CHEBI:30616"/>
    </ligand>
</feature>
<feature type="binding site" evidence="1">
    <location>
        <position position="428"/>
    </location>
    <ligand>
        <name>Zn(2+)</name>
        <dbReference type="ChEBI" id="CHEBI:29105"/>
    </ligand>
</feature>
<feature type="binding site" evidence="1">
    <location>
        <position position="436"/>
    </location>
    <ligand>
        <name>Zn(2+)</name>
        <dbReference type="ChEBI" id="CHEBI:29105"/>
    </ligand>
</feature>
<feature type="binding site" evidence="1">
    <location>
        <position position="439"/>
    </location>
    <ligand>
        <name>Zn(2+)</name>
        <dbReference type="ChEBI" id="CHEBI:29105"/>
    </ligand>
</feature>
<feature type="binding site" evidence="1">
    <location>
        <position position="442"/>
    </location>
    <ligand>
        <name>Zn(2+)</name>
        <dbReference type="ChEBI" id="CHEBI:29105"/>
    </ligand>
</feature>
<protein>
    <recommendedName>
        <fullName>7-cyano-7-deazaguanine synthase</fullName>
        <ecNumber>6.3.4.20</ecNumber>
    </recommendedName>
    <alternativeName>
        <fullName>7-cyano-7-carbaguanine synthase</fullName>
    </alternativeName>
    <alternativeName>
        <fullName>Archaeosine biosynthesis protein QueC</fullName>
    </alternativeName>
    <alternativeName>
        <fullName>PreQ(0) synthase</fullName>
    </alternativeName>
</protein>
<organism>
    <name type="scientific">Sulfolobus acidocaldarius (strain ATCC 33909 / DSM 639 / JCM 8929 / NBRC 15157 / NCIMB 11770)</name>
    <dbReference type="NCBI Taxonomy" id="330779"/>
    <lineage>
        <taxon>Archaea</taxon>
        <taxon>Thermoproteota</taxon>
        <taxon>Thermoprotei</taxon>
        <taxon>Sulfolobales</taxon>
        <taxon>Sulfolobaceae</taxon>
        <taxon>Sulfolobus</taxon>
    </lineage>
</organism>
<reference key="1">
    <citation type="journal article" date="2005" name="J. Bacteriol.">
        <title>The genome of Sulfolobus acidocaldarius, a model organism of the Crenarchaeota.</title>
        <authorList>
            <person name="Chen L."/>
            <person name="Bruegger K."/>
            <person name="Skovgaard M."/>
            <person name="Redder P."/>
            <person name="She Q."/>
            <person name="Torarinsson E."/>
            <person name="Greve B."/>
            <person name="Awayez M."/>
            <person name="Zibat A."/>
            <person name="Klenk H.-P."/>
            <person name="Garrett R.A."/>
        </authorList>
    </citation>
    <scope>NUCLEOTIDE SEQUENCE [LARGE SCALE GENOMIC DNA]</scope>
    <source>
        <strain>ATCC 33909 / DSM 639 / JCM 8929 / NBRC 15157 / NCIMB 11770</strain>
    </source>
</reference>
<comment type="function">
    <text evidence="1">Catalyzes the ATP-dependent conversion of 7-carboxy-7-deazaguanine (CDG) to 7-cyano-7-deazaguanine (preQ(0)).</text>
</comment>
<comment type="catalytic activity">
    <reaction>
        <text>7-carboxy-7-deazaguanine + NH4(+) + ATP = 7-cyano-7-deazaguanine + ADP + phosphate + H2O + H(+)</text>
        <dbReference type="Rhea" id="RHEA:27982"/>
        <dbReference type="ChEBI" id="CHEBI:15377"/>
        <dbReference type="ChEBI" id="CHEBI:15378"/>
        <dbReference type="ChEBI" id="CHEBI:28938"/>
        <dbReference type="ChEBI" id="CHEBI:30616"/>
        <dbReference type="ChEBI" id="CHEBI:43474"/>
        <dbReference type="ChEBI" id="CHEBI:45075"/>
        <dbReference type="ChEBI" id="CHEBI:61036"/>
        <dbReference type="ChEBI" id="CHEBI:456216"/>
        <dbReference type="EC" id="6.3.4.20"/>
    </reaction>
</comment>
<comment type="cofactor">
    <cofactor evidence="1">
        <name>Zn(2+)</name>
        <dbReference type="ChEBI" id="CHEBI:29105"/>
    </cofactor>
    <text evidence="1">Binds 1 zinc ion per subunit.</text>
</comment>
<comment type="pathway">
    <text>Purine metabolism; 7-cyano-7-deazaguanine biosynthesis.</text>
</comment>
<comment type="similarity">
    <text evidence="2">Belongs to the QueC family.</text>
</comment>
<gene>
    <name type="primary">queC</name>
    <name type="ordered locus">Saci_0280</name>
</gene>